<keyword id="KW-1003">Cell membrane</keyword>
<keyword id="KW-0472">Membrane</keyword>
<keyword id="KW-0812">Transmembrane</keyword>
<keyword id="KW-1133">Transmembrane helix</keyword>
<keyword id="KW-0813">Transport</keyword>
<accession>Q5HDJ5</accession>
<proteinExistence type="inferred from homology"/>
<feature type="chain" id="PRO_0000270524" description="Putative hemin transport system permease protein HrtB">
    <location>
        <begin position="1"/>
        <end position="351"/>
    </location>
</feature>
<feature type="transmembrane region" description="Helical" evidence="2">
    <location>
        <begin position="16"/>
        <end position="36"/>
    </location>
</feature>
<feature type="transmembrane region" description="Helical" evidence="2">
    <location>
        <begin position="234"/>
        <end position="254"/>
    </location>
</feature>
<feature type="transmembrane region" description="Helical" evidence="2">
    <location>
        <begin position="281"/>
        <end position="301"/>
    </location>
</feature>
<feature type="transmembrane region" description="Helical" evidence="2">
    <location>
        <begin position="316"/>
        <end position="336"/>
    </location>
</feature>
<name>HRTB_STAAC</name>
<protein>
    <recommendedName>
        <fullName>Putative hemin transport system permease protein HrtB</fullName>
    </recommendedName>
</protein>
<reference key="1">
    <citation type="journal article" date="2005" name="J. Bacteriol.">
        <title>Insights on evolution of virulence and resistance from the complete genome analysis of an early methicillin-resistant Staphylococcus aureus strain and a biofilm-producing methicillin-resistant Staphylococcus epidermidis strain.</title>
        <authorList>
            <person name="Gill S.R."/>
            <person name="Fouts D.E."/>
            <person name="Archer G.L."/>
            <person name="Mongodin E.F."/>
            <person name="DeBoy R.T."/>
            <person name="Ravel J."/>
            <person name="Paulsen I.T."/>
            <person name="Kolonay J.F."/>
            <person name="Brinkac L.M."/>
            <person name="Beanan M.J."/>
            <person name="Dodson R.J."/>
            <person name="Daugherty S.C."/>
            <person name="Madupu R."/>
            <person name="Angiuoli S.V."/>
            <person name="Durkin A.S."/>
            <person name="Haft D.H."/>
            <person name="Vamathevan J.J."/>
            <person name="Khouri H."/>
            <person name="Utterback T.R."/>
            <person name="Lee C."/>
            <person name="Dimitrov G."/>
            <person name="Jiang L."/>
            <person name="Qin H."/>
            <person name="Weidman J."/>
            <person name="Tran K."/>
            <person name="Kang K.H."/>
            <person name="Hance I.R."/>
            <person name="Nelson K.E."/>
            <person name="Fraser C.M."/>
        </authorList>
    </citation>
    <scope>NUCLEOTIDE SEQUENCE [LARGE SCALE GENOMIC DNA]</scope>
    <source>
        <strain>COL</strain>
    </source>
</reference>
<organism>
    <name type="scientific">Staphylococcus aureus (strain COL)</name>
    <dbReference type="NCBI Taxonomy" id="93062"/>
    <lineage>
        <taxon>Bacteria</taxon>
        <taxon>Bacillati</taxon>
        <taxon>Bacillota</taxon>
        <taxon>Bacilli</taxon>
        <taxon>Bacillales</taxon>
        <taxon>Staphylococcaceae</taxon>
        <taxon>Staphylococcus</taxon>
    </lineage>
</organism>
<comment type="function">
    <text evidence="1">Part of the ABC transporter complex hrt involved in hemin import. Responsible for the translocation of the substrate across the membrane (By similarity).</text>
</comment>
<comment type="subunit">
    <text evidence="1">The complex is composed of two ATP-binding proteins (HrtA), two transmembrane proteins (HrtB) and a solute-binding protein.</text>
</comment>
<comment type="subcellular location">
    <subcellularLocation>
        <location evidence="3">Cell membrane</location>
        <topology evidence="3">Multi-pass membrane protein</topology>
    </subcellularLocation>
</comment>
<comment type="similarity">
    <text evidence="3">Belongs to the ABC-4 integral membrane protein family. HrtB subfamily.</text>
</comment>
<dbReference type="EMBL" id="CP000046">
    <property type="protein sequence ID" value="AAW37184.1"/>
    <property type="molecule type" value="Genomic_DNA"/>
</dbReference>
<dbReference type="RefSeq" id="WP_000761395.1">
    <property type="nucleotide sequence ID" value="NZ_JBGOFO010000004.1"/>
</dbReference>
<dbReference type="SMR" id="Q5HDJ5"/>
<dbReference type="KEGG" id="sac:SACOL2357"/>
<dbReference type="HOGENOM" id="CLU_060907_1_0_9"/>
<dbReference type="Proteomes" id="UP000000530">
    <property type="component" value="Chromosome"/>
</dbReference>
<dbReference type="GO" id="GO:0005886">
    <property type="term" value="C:plasma membrane"/>
    <property type="evidence" value="ECO:0007669"/>
    <property type="project" value="UniProtKB-SubCell"/>
</dbReference>
<dbReference type="InterPro" id="IPR051125">
    <property type="entry name" value="ABC-4/HrtB_transporter"/>
</dbReference>
<dbReference type="InterPro" id="IPR003838">
    <property type="entry name" value="ABC3_permease_C"/>
</dbReference>
<dbReference type="PANTHER" id="PTHR43738">
    <property type="entry name" value="ABC TRANSPORTER, MEMBRANE PROTEIN"/>
    <property type="match status" value="1"/>
</dbReference>
<dbReference type="PANTHER" id="PTHR43738:SF1">
    <property type="entry name" value="HEMIN TRANSPORT SYSTEM PERMEASE PROTEIN HRTB-RELATED"/>
    <property type="match status" value="1"/>
</dbReference>
<dbReference type="Pfam" id="PF02687">
    <property type="entry name" value="FtsX"/>
    <property type="match status" value="1"/>
</dbReference>
<evidence type="ECO:0000250" key="1"/>
<evidence type="ECO:0000255" key="2"/>
<evidence type="ECO:0000305" key="3"/>
<sequence>MKLAIKEIMFYKFRYILITLIILLLSIMVLFISGLAQGLGRENISLFEHFDNDEYVVQKMKEPQIEKSQLSDTQQNQIKKVIHQEPYKMNIQTLKLSNKEQDVITMNDVKQQRIQLKKGDYPKNAHEVAINDKLAADNIRVGDRLHFKNNSTSYRVSGILNDTMYAHSSIVLLNDNGFNALNKVNTAFYPVKNLTQQQRDELNKINDVQVVSEKDLTGNIASYQAEQAPLNMMIVSLFAITAIVLSAFFYVMTIQKISQIGILKAIGIKTRHLLSALVLQILTLTIIGVGIAVIIIVGLSFMMPVTMPFYLTTQNILLMVGIFILVAILGASLSFIKLFKVDPIEAIGGAE</sequence>
<gene>
    <name type="primary">hrtB</name>
    <name type="ordered locus">SACOL2357</name>
</gene>